<keyword id="KW-0963">Cytoplasm</keyword>
<keyword id="KW-0378">Hydrolase</keyword>
<keyword id="KW-0694">RNA-binding</keyword>
<keyword id="KW-0820">tRNA-binding</keyword>
<proteinExistence type="inferred from homology"/>
<name>DTD_ECOBW</name>
<feature type="chain" id="PRO_1000211726" description="D-aminoacyl-tRNA deacylase">
    <location>
        <begin position="1"/>
        <end position="145"/>
    </location>
</feature>
<feature type="short sequence motif" description="Gly-cisPro motif, important for rejection of L-amino acids" evidence="1">
    <location>
        <begin position="137"/>
        <end position="138"/>
    </location>
</feature>
<organism>
    <name type="scientific">Escherichia coli (strain K12 / MC4100 / BW2952)</name>
    <dbReference type="NCBI Taxonomy" id="595496"/>
    <lineage>
        <taxon>Bacteria</taxon>
        <taxon>Pseudomonadati</taxon>
        <taxon>Pseudomonadota</taxon>
        <taxon>Gammaproteobacteria</taxon>
        <taxon>Enterobacterales</taxon>
        <taxon>Enterobacteriaceae</taxon>
        <taxon>Escherichia</taxon>
    </lineage>
</organism>
<dbReference type="EC" id="3.1.1.96" evidence="1"/>
<dbReference type="EMBL" id="CP001396">
    <property type="protein sequence ID" value="ACR63014.1"/>
    <property type="molecule type" value="Genomic_DNA"/>
</dbReference>
<dbReference type="RefSeq" id="WP_000560983.1">
    <property type="nucleotide sequence ID" value="NC_012759.1"/>
</dbReference>
<dbReference type="SMR" id="C5A055"/>
<dbReference type="GeneID" id="93778051"/>
<dbReference type="KEGG" id="ebw:BWG_3557"/>
<dbReference type="HOGENOM" id="CLU_076901_1_0_6"/>
<dbReference type="GO" id="GO:0005737">
    <property type="term" value="C:cytoplasm"/>
    <property type="evidence" value="ECO:0007669"/>
    <property type="project" value="UniProtKB-SubCell"/>
</dbReference>
<dbReference type="GO" id="GO:0051500">
    <property type="term" value="F:D-tyrosyl-tRNA(Tyr) deacylase activity"/>
    <property type="evidence" value="ECO:0007669"/>
    <property type="project" value="TreeGrafter"/>
</dbReference>
<dbReference type="GO" id="GO:0106026">
    <property type="term" value="F:Gly-tRNA(Ala) deacylase activity"/>
    <property type="evidence" value="ECO:0007669"/>
    <property type="project" value="UniProtKB-UniRule"/>
</dbReference>
<dbReference type="GO" id="GO:0043908">
    <property type="term" value="F:Ser(Gly)-tRNA(Ala) hydrolase activity"/>
    <property type="evidence" value="ECO:0007669"/>
    <property type="project" value="UniProtKB-UniRule"/>
</dbReference>
<dbReference type="GO" id="GO:0000049">
    <property type="term" value="F:tRNA binding"/>
    <property type="evidence" value="ECO:0007669"/>
    <property type="project" value="UniProtKB-UniRule"/>
</dbReference>
<dbReference type="GO" id="GO:0019478">
    <property type="term" value="P:D-amino acid catabolic process"/>
    <property type="evidence" value="ECO:0007669"/>
    <property type="project" value="UniProtKB-UniRule"/>
</dbReference>
<dbReference type="CDD" id="cd00563">
    <property type="entry name" value="Dtyr_deacylase"/>
    <property type="match status" value="1"/>
</dbReference>
<dbReference type="FunFam" id="3.50.80.10:FF:000001">
    <property type="entry name" value="D-aminoacyl-tRNA deacylase"/>
    <property type="match status" value="1"/>
</dbReference>
<dbReference type="Gene3D" id="3.50.80.10">
    <property type="entry name" value="D-tyrosyl-tRNA(Tyr) deacylase"/>
    <property type="match status" value="1"/>
</dbReference>
<dbReference type="HAMAP" id="MF_00518">
    <property type="entry name" value="Deacylase_Dtd"/>
    <property type="match status" value="1"/>
</dbReference>
<dbReference type="InterPro" id="IPR003732">
    <property type="entry name" value="Daa-tRNA_deacyls_DTD"/>
</dbReference>
<dbReference type="InterPro" id="IPR023509">
    <property type="entry name" value="DTD-like_sf"/>
</dbReference>
<dbReference type="NCBIfam" id="TIGR00256">
    <property type="entry name" value="D-aminoacyl-tRNA deacylase"/>
    <property type="match status" value="1"/>
</dbReference>
<dbReference type="PANTHER" id="PTHR10472:SF5">
    <property type="entry name" value="D-AMINOACYL-TRNA DEACYLASE 1"/>
    <property type="match status" value="1"/>
</dbReference>
<dbReference type="PANTHER" id="PTHR10472">
    <property type="entry name" value="D-TYROSYL-TRNA TYR DEACYLASE"/>
    <property type="match status" value="1"/>
</dbReference>
<dbReference type="Pfam" id="PF02580">
    <property type="entry name" value="Tyr_Deacylase"/>
    <property type="match status" value="1"/>
</dbReference>
<dbReference type="SUPFAM" id="SSF69500">
    <property type="entry name" value="DTD-like"/>
    <property type="match status" value="1"/>
</dbReference>
<reference key="1">
    <citation type="journal article" date="2009" name="J. Bacteriol.">
        <title>Genomic sequencing reveals regulatory mutations and recombinational events in the widely used MC4100 lineage of Escherichia coli K-12.</title>
        <authorList>
            <person name="Ferenci T."/>
            <person name="Zhou Z."/>
            <person name="Betteridge T."/>
            <person name="Ren Y."/>
            <person name="Liu Y."/>
            <person name="Feng L."/>
            <person name="Reeves P.R."/>
            <person name="Wang L."/>
        </authorList>
    </citation>
    <scope>NUCLEOTIDE SEQUENCE [LARGE SCALE GENOMIC DNA]</scope>
    <source>
        <strain>K12 / MC4100 / BW2952</strain>
    </source>
</reference>
<comment type="function">
    <text evidence="1">An aminoacyl-tRNA editing enzyme that deacylates mischarged D-aminoacyl-tRNAs. Also deacylates mischarged glycyl-tRNA(Ala), protecting cells against glycine mischarging by AlaRS. Acts via tRNA-based rather than protein-based catalysis; rejects L-amino acids rather than detecting D-amino acids in the active site. By recycling D-aminoacyl-tRNA to D-amino acids and free tRNA molecules, this enzyme counteracts the toxicity associated with the formation of D-aminoacyl-tRNA entities in vivo and helps enforce protein L-homochirality.</text>
</comment>
<comment type="catalytic activity">
    <reaction evidence="1">
        <text>glycyl-tRNA(Ala) + H2O = tRNA(Ala) + glycine + H(+)</text>
        <dbReference type="Rhea" id="RHEA:53744"/>
        <dbReference type="Rhea" id="RHEA-COMP:9657"/>
        <dbReference type="Rhea" id="RHEA-COMP:13640"/>
        <dbReference type="ChEBI" id="CHEBI:15377"/>
        <dbReference type="ChEBI" id="CHEBI:15378"/>
        <dbReference type="ChEBI" id="CHEBI:57305"/>
        <dbReference type="ChEBI" id="CHEBI:78442"/>
        <dbReference type="ChEBI" id="CHEBI:78522"/>
        <dbReference type="EC" id="3.1.1.96"/>
    </reaction>
</comment>
<comment type="catalytic activity">
    <reaction evidence="1">
        <text>a D-aminoacyl-tRNA + H2O = a tRNA + a D-alpha-amino acid + H(+)</text>
        <dbReference type="Rhea" id="RHEA:13953"/>
        <dbReference type="Rhea" id="RHEA-COMP:10123"/>
        <dbReference type="Rhea" id="RHEA-COMP:10124"/>
        <dbReference type="ChEBI" id="CHEBI:15377"/>
        <dbReference type="ChEBI" id="CHEBI:15378"/>
        <dbReference type="ChEBI" id="CHEBI:59871"/>
        <dbReference type="ChEBI" id="CHEBI:78442"/>
        <dbReference type="ChEBI" id="CHEBI:79333"/>
        <dbReference type="EC" id="3.1.1.96"/>
    </reaction>
</comment>
<comment type="subunit">
    <text evidence="1">Homodimer.</text>
</comment>
<comment type="subcellular location">
    <subcellularLocation>
        <location evidence="1">Cytoplasm</location>
    </subcellularLocation>
</comment>
<comment type="domain">
    <text evidence="1">A Gly-cisPro motif from one monomer fits into the active site of the other monomer to allow specific chiral rejection of L-amino acids.</text>
</comment>
<comment type="similarity">
    <text evidence="1">Belongs to the DTD family.</text>
</comment>
<accession>C5A055</accession>
<evidence type="ECO:0000255" key="1">
    <source>
        <dbReference type="HAMAP-Rule" id="MF_00518"/>
    </source>
</evidence>
<gene>
    <name evidence="1" type="primary">dtd</name>
    <name type="ordered locus">BWG_3557</name>
</gene>
<protein>
    <recommendedName>
        <fullName evidence="1">D-aminoacyl-tRNA deacylase</fullName>
        <shortName evidence="1">DTD</shortName>
        <ecNumber evidence="1">3.1.1.96</ecNumber>
    </recommendedName>
    <alternativeName>
        <fullName evidence="1">Gly-tRNA(Ala) deacylase</fullName>
    </alternativeName>
</protein>
<sequence length="145" mass="15950">MIALIQRVTRASVTVEGEVTGEIGAGLLVLLGVEKDDDEQKANRLCERVLGYRIFSDAEGKMNLNVQQAGGSVLVVSQFTLAADTERGMRPSFSKGASPDRAEALYDYFVERCRQQEMNTQTGRFAADMQVSLVNDGPVTFWLQV</sequence>